<proteinExistence type="inferred from homology"/>
<evidence type="ECO:0000255" key="1">
    <source>
        <dbReference type="HAMAP-Rule" id="MF_01022"/>
    </source>
</evidence>
<feature type="chain" id="PRO_1000135370" description="Histidine biosynthesis bifunctional protein HisB">
    <location>
        <begin position="1"/>
        <end position="357"/>
    </location>
</feature>
<feature type="region of interest" description="Histidinol-phosphatase" evidence="1">
    <location>
        <begin position="1"/>
        <end position="168"/>
    </location>
</feature>
<feature type="region of interest" description="Imidazoleglycerol-phosphate dehydratase" evidence="1">
    <location>
        <begin position="169"/>
        <end position="357"/>
    </location>
</feature>
<feature type="active site" description="Nucleophile" evidence="1">
    <location>
        <position position="8"/>
    </location>
</feature>
<feature type="active site" description="Proton donor" evidence="1">
    <location>
        <position position="10"/>
    </location>
</feature>
<feature type="binding site" evidence="1">
    <location>
        <position position="8"/>
    </location>
    <ligand>
        <name>Mg(2+)</name>
        <dbReference type="ChEBI" id="CHEBI:18420"/>
    </ligand>
</feature>
<feature type="binding site" evidence="1">
    <location>
        <position position="10"/>
    </location>
    <ligand>
        <name>Mg(2+)</name>
        <dbReference type="ChEBI" id="CHEBI:18420"/>
    </ligand>
</feature>
<feature type="binding site" evidence="1">
    <location>
        <position position="128"/>
    </location>
    <ligand>
        <name>Mg(2+)</name>
        <dbReference type="ChEBI" id="CHEBI:18420"/>
    </ligand>
</feature>
<reference key="1">
    <citation type="submission" date="2008-06" db="EMBL/GenBank/DDBJ databases">
        <title>Complete sequence of Stenotrophomonas maltophilia R551-3.</title>
        <authorList>
            <consortium name="US DOE Joint Genome Institute"/>
            <person name="Lucas S."/>
            <person name="Copeland A."/>
            <person name="Lapidus A."/>
            <person name="Glavina del Rio T."/>
            <person name="Dalin E."/>
            <person name="Tice H."/>
            <person name="Pitluck S."/>
            <person name="Chain P."/>
            <person name="Malfatti S."/>
            <person name="Shin M."/>
            <person name="Vergez L."/>
            <person name="Lang D."/>
            <person name="Schmutz J."/>
            <person name="Larimer F."/>
            <person name="Land M."/>
            <person name="Hauser L."/>
            <person name="Kyrpides N."/>
            <person name="Mikhailova N."/>
            <person name="Taghavi S."/>
            <person name="Monchy S."/>
            <person name="Newman L."/>
            <person name="Vangronsveld J."/>
            <person name="van der Lelie D."/>
            <person name="Richardson P."/>
        </authorList>
    </citation>
    <scope>NUCLEOTIDE SEQUENCE [LARGE SCALE GENOMIC DNA]</scope>
    <source>
        <strain>R551-3</strain>
    </source>
</reference>
<sequence>MTPILFIDRDGTLIEEPSDFQIDAYEKLRFVPQVIPALLKLRDAGYQFVIVTNQDGLGSDSYPRASFDGPNELMLQIFESQGITFRDVLIDCSWPQDNAPTRKPGIGLMTAYLQDRSIDWARSGMVGDRITDLQFAENLNIRGFQLRTEQFGGEWDWPGIAHALADAPRIAVVQRDTKETKIRVELDLDRAGDARIDTGLPFFDHMLEQIGKHGGFALDIQAEGDLHIDEHHTIEDTGLALGQALREALGDKRGIGRYGFTLPMDETLASAALDFSGRPYFVFEGEFKRERVGDMPTELVPHFFRSLCDASGLNLNLQVRGDNDHHKVEACFKALARALRPALARQGTALPTTKGAL</sequence>
<name>HIS7_STRM5</name>
<comment type="catalytic activity">
    <reaction evidence="1">
        <text>D-erythro-1-(imidazol-4-yl)glycerol 3-phosphate = 3-(imidazol-4-yl)-2-oxopropyl phosphate + H2O</text>
        <dbReference type="Rhea" id="RHEA:11040"/>
        <dbReference type="ChEBI" id="CHEBI:15377"/>
        <dbReference type="ChEBI" id="CHEBI:57766"/>
        <dbReference type="ChEBI" id="CHEBI:58278"/>
        <dbReference type="EC" id="4.2.1.19"/>
    </reaction>
</comment>
<comment type="catalytic activity">
    <reaction evidence="1">
        <text>L-histidinol phosphate + H2O = L-histidinol + phosphate</text>
        <dbReference type="Rhea" id="RHEA:14465"/>
        <dbReference type="ChEBI" id="CHEBI:15377"/>
        <dbReference type="ChEBI" id="CHEBI:43474"/>
        <dbReference type="ChEBI" id="CHEBI:57699"/>
        <dbReference type="ChEBI" id="CHEBI:57980"/>
        <dbReference type="EC" id="3.1.3.15"/>
    </reaction>
</comment>
<comment type="cofactor">
    <cofactor evidence="1">
        <name>Mg(2+)</name>
        <dbReference type="ChEBI" id="CHEBI:18420"/>
    </cofactor>
</comment>
<comment type="pathway">
    <text evidence="1">Amino-acid biosynthesis; L-histidine biosynthesis; L-histidine from 5-phospho-alpha-D-ribose 1-diphosphate: step 6/9.</text>
</comment>
<comment type="pathway">
    <text evidence="1">Amino-acid biosynthesis; L-histidine biosynthesis; L-histidine from 5-phospho-alpha-D-ribose 1-diphosphate: step 8/9.</text>
</comment>
<comment type="subcellular location">
    <subcellularLocation>
        <location evidence="1">Cytoplasm</location>
    </subcellularLocation>
</comment>
<comment type="similarity">
    <text evidence="1">In the N-terminal section; belongs to the histidinol-phosphatase family.</text>
</comment>
<comment type="similarity">
    <text evidence="1">In the C-terminal section; belongs to the imidazoleglycerol-phosphate dehydratase family.</text>
</comment>
<accession>B4STN9</accession>
<gene>
    <name evidence="1" type="primary">hisB</name>
    <name type="ordered locus">Smal_1759</name>
</gene>
<keyword id="KW-0028">Amino-acid biosynthesis</keyword>
<keyword id="KW-0963">Cytoplasm</keyword>
<keyword id="KW-0368">Histidine biosynthesis</keyword>
<keyword id="KW-0378">Hydrolase</keyword>
<keyword id="KW-0456">Lyase</keyword>
<keyword id="KW-0460">Magnesium</keyword>
<keyword id="KW-0479">Metal-binding</keyword>
<keyword id="KW-0511">Multifunctional enzyme</keyword>
<dbReference type="EC" id="3.1.3.15" evidence="1"/>
<dbReference type="EC" id="4.2.1.19" evidence="1"/>
<dbReference type="EMBL" id="CP001111">
    <property type="protein sequence ID" value="ACF51463.1"/>
    <property type="molecule type" value="Genomic_DNA"/>
</dbReference>
<dbReference type="RefSeq" id="WP_006363222.1">
    <property type="nucleotide sequence ID" value="NC_011071.1"/>
</dbReference>
<dbReference type="SMR" id="B4STN9"/>
<dbReference type="STRING" id="391008.Smal_1759"/>
<dbReference type="KEGG" id="smt:Smal_1759"/>
<dbReference type="eggNOG" id="COG0131">
    <property type="taxonomic scope" value="Bacteria"/>
</dbReference>
<dbReference type="eggNOG" id="COG0241">
    <property type="taxonomic scope" value="Bacteria"/>
</dbReference>
<dbReference type="HOGENOM" id="CLU_044308_0_0_6"/>
<dbReference type="OrthoDB" id="9790411at2"/>
<dbReference type="UniPathway" id="UPA00031">
    <property type="reaction ID" value="UER00011"/>
</dbReference>
<dbReference type="UniPathway" id="UPA00031">
    <property type="reaction ID" value="UER00013"/>
</dbReference>
<dbReference type="Proteomes" id="UP000001867">
    <property type="component" value="Chromosome"/>
</dbReference>
<dbReference type="GO" id="GO:0005737">
    <property type="term" value="C:cytoplasm"/>
    <property type="evidence" value="ECO:0007669"/>
    <property type="project" value="UniProtKB-SubCell"/>
</dbReference>
<dbReference type="GO" id="GO:0004401">
    <property type="term" value="F:histidinol-phosphatase activity"/>
    <property type="evidence" value="ECO:0007669"/>
    <property type="project" value="UniProtKB-UniRule"/>
</dbReference>
<dbReference type="GO" id="GO:0004424">
    <property type="term" value="F:imidazoleglycerol-phosphate dehydratase activity"/>
    <property type="evidence" value="ECO:0007669"/>
    <property type="project" value="UniProtKB-UniRule"/>
</dbReference>
<dbReference type="GO" id="GO:0046872">
    <property type="term" value="F:metal ion binding"/>
    <property type="evidence" value="ECO:0007669"/>
    <property type="project" value="UniProtKB-KW"/>
</dbReference>
<dbReference type="GO" id="GO:0000105">
    <property type="term" value="P:L-histidine biosynthetic process"/>
    <property type="evidence" value="ECO:0007669"/>
    <property type="project" value="UniProtKB-UniRule"/>
</dbReference>
<dbReference type="CDD" id="cd07914">
    <property type="entry name" value="IGPD"/>
    <property type="match status" value="1"/>
</dbReference>
<dbReference type="FunFam" id="3.30.230.40:FF:000001">
    <property type="entry name" value="Imidazoleglycerol-phosphate dehydratase HisB"/>
    <property type="match status" value="1"/>
</dbReference>
<dbReference type="FunFam" id="3.30.230.40:FF:000003">
    <property type="entry name" value="Imidazoleglycerol-phosphate dehydratase HisB"/>
    <property type="match status" value="1"/>
</dbReference>
<dbReference type="Gene3D" id="3.40.50.1000">
    <property type="entry name" value="HAD superfamily/HAD-like"/>
    <property type="match status" value="1"/>
</dbReference>
<dbReference type="Gene3D" id="3.30.230.40">
    <property type="entry name" value="Imidazole glycerol phosphate dehydratase, domain 1"/>
    <property type="match status" value="2"/>
</dbReference>
<dbReference type="HAMAP" id="MF_01022">
    <property type="entry name" value="Bifunc_HisB"/>
    <property type="match status" value="1"/>
</dbReference>
<dbReference type="HAMAP" id="MF_00076">
    <property type="entry name" value="HisB"/>
    <property type="match status" value="1"/>
</dbReference>
<dbReference type="InterPro" id="IPR036412">
    <property type="entry name" value="HAD-like_sf"/>
</dbReference>
<dbReference type="InterPro" id="IPR006549">
    <property type="entry name" value="HAD-SF_hydro_IIIA"/>
</dbReference>
<dbReference type="InterPro" id="IPR023214">
    <property type="entry name" value="HAD_sf"/>
</dbReference>
<dbReference type="InterPro" id="IPR020566">
    <property type="entry name" value="His_synth_bifunc_HisB"/>
</dbReference>
<dbReference type="InterPro" id="IPR005954">
    <property type="entry name" value="HisB_N"/>
</dbReference>
<dbReference type="InterPro" id="IPR006543">
    <property type="entry name" value="Histidinol-phos"/>
</dbReference>
<dbReference type="InterPro" id="IPR038494">
    <property type="entry name" value="IGPD_sf"/>
</dbReference>
<dbReference type="InterPro" id="IPR000807">
    <property type="entry name" value="ImidazoleglycerolP_deHydtase"/>
</dbReference>
<dbReference type="InterPro" id="IPR020565">
    <property type="entry name" value="ImidazoleglycerP_deHydtase_CS"/>
</dbReference>
<dbReference type="InterPro" id="IPR013954">
    <property type="entry name" value="PNK3P"/>
</dbReference>
<dbReference type="InterPro" id="IPR020568">
    <property type="entry name" value="Ribosomal_Su5_D2-typ_SF"/>
</dbReference>
<dbReference type="NCBIfam" id="TIGR01662">
    <property type="entry name" value="HAD-SF-IIIA"/>
    <property type="match status" value="1"/>
</dbReference>
<dbReference type="NCBIfam" id="TIGR01261">
    <property type="entry name" value="hisB_Nterm"/>
    <property type="match status" value="1"/>
</dbReference>
<dbReference type="NCBIfam" id="TIGR01656">
    <property type="entry name" value="Histidinol-ppas"/>
    <property type="match status" value="1"/>
</dbReference>
<dbReference type="NCBIfam" id="NF002111">
    <property type="entry name" value="PRK00951.2-1"/>
    <property type="match status" value="1"/>
</dbReference>
<dbReference type="NCBIfam" id="NF002114">
    <property type="entry name" value="PRK00951.2-4"/>
    <property type="match status" value="1"/>
</dbReference>
<dbReference type="NCBIfam" id="NF003937">
    <property type="entry name" value="PRK05446.1"/>
    <property type="match status" value="1"/>
</dbReference>
<dbReference type="PANTHER" id="PTHR23133:SF2">
    <property type="entry name" value="IMIDAZOLEGLYCEROL-PHOSPHATE DEHYDRATASE"/>
    <property type="match status" value="1"/>
</dbReference>
<dbReference type="PANTHER" id="PTHR23133">
    <property type="entry name" value="IMIDAZOLEGLYCEROL-PHOSPHATE DEHYDRATASE HIS7"/>
    <property type="match status" value="1"/>
</dbReference>
<dbReference type="Pfam" id="PF00475">
    <property type="entry name" value="IGPD"/>
    <property type="match status" value="1"/>
</dbReference>
<dbReference type="Pfam" id="PF08645">
    <property type="entry name" value="PNK3P"/>
    <property type="match status" value="1"/>
</dbReference>
<dbReference type="SUPFAM" id="SSF56784">
    <property type="entry name" value="HAD-like"/>
    <property type="match status" value="1"/>
</dbReference>
<dbReference type="SUPFAM" id="SSF54211">
    <property type="entry name" value="Ribosomal protein S5 domain 2-like"/>
    <property type="match status" value="2"/>
</dbReference>
<dbReference type="PROSITE" id="PS00954">
    <property type="entry name" value="IGP_DEHYDRATASE_1"/>
    <property type="match status" value="1"/>
</dbReference>
<dbReference type="PROSITE" id="PS00955">
    <property type="entry name" value="IGP_DEHYDRATASE_2"/>
    <property type="match status" value="1"/>
</dbReference>
<protein>
    <recommendedName>
        <fullName evidence="1">Histidine biosynthesis bifunctional protein HisB</fullName>
    </recommendedName>
    <domain>
        <recommendedName>
            <fullName evidence="1">Histidinol-phosphatase</fullName>
            <ecNumber evidence="1">3.1.3.15</ecNumber>
        </recommendedName>
    </domain>
    <domain>
        <recommendedName>
            <fullName evidence="1">Imidazoleglycerol-phosphate dehydratase</fullName>
            <shortName evidence="1">IGPD</shortName>
            <ecNumber evidence="1">4.2.1.19</ecNumber>
        </recommendedName>
    </domain>
</protein>
<organism>
    <name type="scientific">Stenotrophomonas maltophilia (strain R551-3)</name>
    <dbReference type="NCBI Taxonomy" id="391008"/>
    <lineage>
        <taxon>Bacteria</taxon>
        <taxon>Pseudomonadati</taxon>
        <taxon>Pseudomonadota</taxon>
        <taxon>Gammaproteobacteria</taxon>
        <taxon>Lysobacterales</taxon>
        <taxon>Lysobacteraceae</taxon>
        <taxon>Stenotrophomonas</taxon>
        <taxon>Stenotrophomonas maltophilia group</taxon>
    </lineage>
</organism>